<organism>
    <name type="scientific">Treponema pallidum (strain Nichols)</name>
    <dbReference type="NCBI Taxonomy" id="243276"/>
    <lineage>
        <taxon>Bacteria</taxon>
        <taxon>Pseudomonadati</taxon>
        <taxon>Spirochaetota</taxon>
        <taxon>Spirochaetia</taxon>
        <taxon>Spirochaetales</taxon>
        <taxon>Treponemataceae</taxon>
        <taxon>Treponema</taxon>
    </lineage>
</organism>
<dbReference type="EC" id="1.1.1.28"/>
<dbReference type="EMBL" id="AE000520">
    <property type="protein sequence ID" value="AAC65033.1"/>
    <property type="molecule type" value="Genomic_DNA"/>
</dbReference>
<dbReference type="PIR" id="D71373">
    <property type="entry name" value="D71373"/>
</dbReference>
<dbReference type="RefSeq" id="WP_010881486.1">
    <property type="nucleotide sequence ID" value="NC_021490.2"/>
</dbReference>
<dbReference type="PDB" id="7JP2">
    <property type="method" value="X-ray"/>
    <property type="resolution" value="1.38 A"/>
    <property type="chains" value="A/B=1-331"/>
</dbReference>
<dbReference type="PDBsum" id="7JP2"/>
<dbReference type="SMR" id="O83080"/>
<dbReference type="IntAct" id="O83080">
    <property type="interactions" value="1"/>
</dbReference>
<dbReference type="STRING" id="243276.TP_0037"/>
<dbReference type="EnsemblBacteria" id="AAC65033">
    <property type="protein sequence ID" value="AAC65033"/>
    <property type="gene ID" value="TP_0037"/>
</dbReference>
<dbReference type="KEGG" id="tpa:TP_0037"/>
<dbReference type="KEGG" id="tpw:TPANIC_0037"/>
<dbReference type="eggNOG" id="COG1052">
    <property type="taxonomic scope" value="Bacteria"/>
</dbReference>
<dbReference type="HOGENOM" id="CLU_019796_1_1_12"/>
<dbReference type="OrthoDB" id="9805416at2"/>
<dbReference type="BRENDA" id="1.1.1.28">
    <property type="organism ID" value="6429"/>
</dbReference>
<dbReference type="Proteomes" id="UP000000811">
    <property type="component" value="Chromosome"/>
</dbReference>
<dbReference type="GO" id="GO:0008720">
    <property type="term" value="F:D-lactate dehydrogenase activity"/>
    <property type="evidence" value="ECO:0007669"/>
    <property type="project" value="UniProtKB-EC"/>
</dbReference>
<dbReference type="GO" id="GO:0051287">
    <property type="term" value="F:NAD binding"/>
    <property type="evidence" value="ECO:0007669"/>
    <property type="project" value="InterPro"/>
</dbReference>
<dbReference type="CDD" id="cd12186">
    <property type="entry name" value="LDH"/>
    <property type="match status" value="1"/>
</dbReference>
<dbReference type="Gene3D" id="3.40.50.720">
    <property type="entry name" value="NAD(P)-binding Rossmann-like Domain"/>
    <property type="match status" value="2"/>
</dbReference>
<dbReference type="InterPro" id="IPR006139">
    <property type="entry name" value="D-isomer_2_OHA_DH_cat_dom"/>
</dbReference>
<dbReference type="InterPro" id="IPR029753">
    <property type="entry name" value="D-isomer_DH_CS"/>
</dbReference>
<dbReference type="InterPro" id="IPR029752">
    <property type="entry name" value="D-isomer_DH_CS1"/>
</dbReference>
<dbReference type="InterPro" id="IPR006140">
    <property type="entry name" value="D-isomer_DH_NAD-bd"/>
</dbReference>
<dbReference type="InterPro" id="IPR036291">
    <property type="entry name" value="NAD(P)-bd_dom_sf"/>
</dbReference>
<dbReference type="PANTHER" id="PTHR43026">
    <property type="entry name" value="2-HYDROXYACID DEHYDROGENASE HOMOLOG 1-RELATED"/>
    <property type="match status" value="1"/>
</dbReference>
<dbReference type="PANTHER" id="PTHR43026:SF1">
    <property type="entry name" value="2-HYDROXYACID DEHYDROGENASE HOMOLOG 1-RELATED"/>
    <property type="match status" value="1"/>
</dbReference>
<dbReference type="Pfam" id="PF00389">
    <property type="entry name" value="2-Hacid_dh"/>
    <property type="match status" value="1"/>
</dbReference>
<dbReference type="Pfam" id="PF02826">
    <property type="entry name" value="2-Hacid_dh_C"/>
    <property type="match status" value="1"/>
</dbReference>
<dbReference type="SUPFAM" id="SSF52283">
    <property type="entry name" value="Formate/glycerate dehydrogenase catalytic domain-like"/>
    <property type="match status" value="1"/>
</dbReference>
<dbReference type="SUPFAM" id="SSF51735">
    <property type="entry name" value="NAD(P)-binding Rossmann-fold domains"/>
    <property type="match status" value="1"/>
</dbReference>
<dbReference type="PROSITE" id="PS00065">
    <property type="entry name" value="D_2_HYDROXYACID_DH_1"/>
    <property type="match status" value="1"/>
</dbReference>
<dbReference type="PROSITE" id="PS00670">
    <property type="entry name" value="D_2_HYDROXYACID_DH_2"/>
    <property type="match status" value="1"/>
</dbReference>
<dbReference type="PROSITE" id="PS00671">
    <property type="entry name" value="D_2_HYDROXYACID_DH_3"/>
    <property type="match status" value="1"/>
</dbReference>
<feature type="chain" id="PRO_0000075971" description="D-lactate dehydrogenase">
    <location>
        <begin position="1"/>
        <end position="331"/>
    </location>
</feature>
<feature type="active site" evidence="1">
    <location>
        <position position="235"/>
    </location>
</feature>
<feature type="active site" evidence="1">
    <location>
        <position position="264"/>
    </location>
</feature>
<feature type="active site" description="Proton donor" evidence="1">
    <location>
        <position position="296"/>
    </location>
</feature>
<feature type="binding site" evidence="2">
    <location>
        <begin position="156"/>
        <end position="157"/>
    </location>
    <ligand>
        <name>NAD(+)</name>
        <dbReference type="ChEBI" id="CHEBI:57540"/>
    </ligand>
</feature>
<feature type="binding site" evidence="1">
    <location>
        <position position="176"/>
    </location>
    <ligand>
        <name>NAD(+)</name>
        <dbReference type="ChEBI" id="CHEBI:57540"/>
    </ligand>
</feature>
<feature type="binding site" evidence="2">
    <location>
        <begin position="206"/>
        <end position="207"/>
    </location>
    <ligand>
        <name>NAD(+)</name>
        <dbReference type="ChEBI" id="CHEBI:57540"/>
    </ligand>
</feature>
<feature type="binding site" evidence="2">
    <location>
        <begin position="233"/>
        <end position="235"/>
    </location>
    <ligand>
        <name>NAD(+)</name>
        <dbReference type="ChEBI" id="CHEBI:57540"/>
    </ligand>
</feature>
<feature type="binding site" evidence="2">
    <location>
        <position position="259"/>
    </location>
    <ligand>
        <name>NAD(+)</name>
        <dbReference type="ChEBI" id="CHEBI:57540"/>
    </ligand>
</feature>
<feature type="strand" evidence="4">
    <location>
        <begin position="2"/>
        <end position="5"/>
    </location>
</feature>
<feature type="turn" evidence="4">
    <location>
        <begin position="10"/>
        <end position="12"/>
    </location>
</feature>
<feature type="helix" evidence="4">
    <location>
        <begin position="13"/>
        <end position="22"/>
    </location>
</feature>
<feature type="strand" evidence="4">
    <location>
        <begin position="27"/>
        <end position="30"/>
    </location>
</feature>
<feature type="helix" evidence="4">
    <location>
        <begin position="37"/>
        <end position="43"/>
    </location>
</feature>
<feature type="strand" evidence="4">
    <location>
        <begin position="47"/>
        <end position="51"/>
    </location>
</feature>
<feature type="helix" evidence="4">
    <location>
        <begin position="59"/>
        <end position="68"/>
    </location>
</feature>
<feature type="strand" evidence="4">
    <location>
        <begin position="72"/>
        <end position="78"/>
    </location>
</feature>
<feature type="helix" evidence="4">
    <location>
        <begin position="85"/>
        <end position="90"/>
    </location>
</feature>
<feature type="strand" evidence="4">
    <location>
        <begin position="94"/>
        <end position="96"/>
    </location>
</feature>
<feature type="helix" evidence="4">
    <location>
        <begin position="103"/>
        <end position="118"/>
    </location>
</feature>
<feature type="helix" evidence="4">
    <location>
        <begin position="121"/>
        <end position="129"/>
    </location>
</feature>
<feature type="helix" evidence="4">
    <location>
        <begin position="137"/>
        <end position="139"/>
    </location>
</feature>
<feature type="helix" evidence="4">
    <location>
        <begin position="144"/>
        <end position="146"/>
    </location>
</feature>
<feature type="strand" evidence="4">
    <location>
        <begin position="147"/>
        <end position="152"/>
    </location>
</feature>
<feature type="helix" evidence="4">
    <location>
        <begin position="156"/>
        <end position="167"/>
    </location>
</feature>
<feature type="strand" evidence="4">
    <location>
        <begin position="171"/>
        <end position="175"/>
    </location>
</feature>
<feature type="helix" evidence="4">
    <location>
        <begin position="182"/>
        <end position="185"/>
    </location>
</feature>
<feature type="helix" evidence="4">
    <location>
        <begin position="192"/>
        <end position="198"/>
    </location>
</feature>
<feature type="strand" evidence="4">
    <location>
        <begin position="200"/>
        <end position="204"/>
    </location>
</feature>
<feature type="turn" evidence="4">
    <location>
        <begin position="210"/>
        <end position="214"/>
    </location>
</feature>
<feature type="helix" evidence="4">
    <location>
        <begin position="218"/>
        <end position="222"/>
    </location>
</feature>
<feature type="strand" evidence="4">
    <location>
        <begin position="228"/>
        <end position="232"/>
    </location>
</feature>
<feature type="helix" evidence="4">
    <location>
        <begin position="236"/>
        <end position="238"/>
    </location>
</feature>
<feature type="helix" evidence="4">
    <location>
        <begin position="241"/>
        <end position="249"/>
    </location>
</feature>
<feature type="strand" evidence="4">
    <location>
        <begin position="252"/>
        <end position="259"/>
    </location>
</feature>
<feature type="turn" evidence="4">
    <location>
        <begin position="265"/>
        <end position="269"/>
    </location>
</feature>
<feature type="helix" evidence="4">
    <location>
        <begin position="280"/>
        <end position="287"/>
    </location>
</feature>
<feature type="strand" evidence="4">
    <location>
        <begin position="291"/>
        <end position="293"/>
    </location>
</feature>
<feature type="helix" evidence="4">
    <location>
        <begin position="302"/>
        <end position="320"/>
    </location>
</feature>
<name>LDHD_TREPA</name>
<keyword id="KW-0002">3D-structure</keyword>
<keyword id="KW-0520">NAD</keyword>
<keyword id="KW-0560">Oxidoreductase</keyword>
<keyword id="KW-1185">Reference proteome</keyword>
<comment type="catalytic activity">
    <reaction>
        <text>(R)-lactate + NAD(+) = pyruvate + NADH + H(+)</text>
        <dbReference type="Rhea" id="RHEA:16369"/>
        <dbReference type="ChEBI" id="CHEBI:15361"/>
        <dbReference type="ChEBI" id="CHEBI:15378"/>
        <dbReference type="ChEBI" id="CHEBI:16004"/>
        <dbReference type="ChEBI" id="CHEBI:57540"/>
        <dbReference type="ChEBI" id="CHEBI:57945"/>
        <dbReference type="EC" id="1.1.1.28"/>
    </reaction>
</comment>
<comment type="similarity">
    <text evidence="3">Belongs to the D-isomer specific 2-hydroxyacid dehydrogenase family.</text>
</comment>
<sequence>MRCVVFNLREEEAPYVEKWKQSHPGVVVDTYEEPLTAKNKELLKGYEGLVVMQFLAMEDEVYDYMGACKLKVLSTRTAGFDMYNATLLKKHGIRLTNVPSYSPNAIGEYALAAALQLTRHAREIETFVRKRDFRWQKPILSKELRCSRVGILGTGRIGQAAARLFKGVGAQVVGFDPYPNDAAKEWLTYVSMDELLSTSDVISLHMPATKDSHHLINAKTIAQMKDGVYLVNTARGAVIDSQALLDSLDKGKIAGAALDAYEFEGPYIPKDNGNNPITDTVYARLVAHERIIYTPHIAFYTETAIENMVFNSLDACTTVLRGEPCAAEIKL</sequence>
<evidence type="ECO:0000250" key="1">
    <source>
        <dbReference type="UniProtKB" id="P26297"/>
    </source>
</evidence>
<evidence type="ECO:0000250" key="2">
    <source>
        <dbReference type="UniProtKB" id="P30901"/>
    </source>
</evidence>
<evidence type="ECO:0000305" key="3"/>
<evidence type="ECO:0007829" key="4">
    <source>
        <dbReference type="PDB" id="7JP2"/>
    </source>
</evidence>
<gene>
    <name type="primary">ldhD</name>
    <name type="ordered locus">TP_0037</name>
</gene>
<protein>
    <recommendedName>
        <fullName>D-lactate dehydrogenase</fullName>
        <shortName>D-LDH</shortName>
        <ecNumber>1.1.1.28</ecNumber>
    </recommendedName>
    <alternativeName>
        <fullName>D-specific 2-hydroxyacid dehydrogenase</fullName>
    </alternativeName>
</protein>
<reference key="1">
    <citation type="journal article" date="1998" name="Science">
        <title>Complete genome sequence of Treponema pallidum, the syphilis spirochete.</title>
        <authorList>
            <person name="Fraser C.M."/>
            <person name="Norris S.J."/>
            <person name="Weinstock G.M."/>
            <person name="White O."/>
            <person name="Sutton G.G."/>
            <person name="Dodson R.J."/>
            <person name="Gwinn M.L."/>
            <person name="Hickey E.K."/>
            <person name="Clayton R.A."/>
            <person name="Ketchum K.A."/>
            <person name="Sodergren E."/>
            <person name="Hardham J.M."/>
            <person name="McLeod M.P."/>
            <person name="Salzberg S.L."/>
            <person name="Peterson J.D."/>
            <person name="Khalak H.G."/>
            <person name="Richardson D.L."/>
            <person name="Howell J.K."/>
            <person name="Chidambaram M."/>
            <person name="Utterback T.R."/>
            <person name="McDonald L.A."/>
            <person name="Artiach P."/>
            <person name="Bowman C."/>
            <person name="Cotton M.D."/>
            <person name="Fujii C."/>
            <person name="Garland S.A."/>
            <person name="Hatch B."/>
            <person name="Horst K."/>
            <person name="Roberts K.M."/>
            <person name="Sandusky M."/>
            <person name="Weidman J.F."/>
            <person name="Smith H.O."/>
            <person name="Venter J.C."/>
        </authorList>
    </citation>
    <scope>NUCLEOTIDE SEQUENCE [LARGE SCALE GENOMIC DNA]</scope>
    <source>
        <strain>Nichols</strain>
    </source>
</reference>
<accession>O83080</accession>
<proteinExistence type="evidence at protein level"/>